<name>ELOV5_RAT</name>
<protein>
    <recommendedName>
        <fullName evidence="3">Very long chain fatty acid elongase 5</fullName>
        <ecNumber evidence="3 5 6">2.3.1.199</ecNumber>
    </recommendedName>
    <alternativeName>
        <fullName evidence="3">3-keto acyl-CoA synthase Elovl5</fullName>
    </alternativeName>
    <alternativeName>
        <fullName evidence="3">ELOVL fatty acid elongase 5</fullName>
        <shortName evidence="3">ELOVL FA elongase 5</shortName>
    </alternativeName>
    <alternativeName>
        <fullName evidence="3">Elongation of very long chain fatty acids protein 5</fullName>
    </alternativeName>
    <alternativeName>
        <fullName>Fatty acid elongase 1</fullName>
        <shortName>rELO1</shortName>
    </alternativeName>
    <alternativeName>
        <fullName evidence="3">Very long chain 3-ketoacyl-CoA synthase 5</fullName>
    </alternativeName>
    <alternativeName>
        <fullName evidence="3">Very long chain 3-oxoacyl-CoA synthase 5</fullName>
    </alternativeName>
</protein>
<organism>
    <name type="scientific">Rattus norvegicus</name>
    <name type="common">Rat</name>
    <dbReference type="NCBI Taxonomy" id="10116"/>
    <lineage>
        <taxon>Eukaryota</taxon>
        <taxon>Metazoa</taxon>
        <taxon>Chordata</taxon>
        <taxon>Craniata</taxon>
        <taxon>Vertebrata</taxon>
        <taxon>Euteleostomi</taxon>
        <taxon>Mammalia</taxon>
        <taxon>Eutheria</taxon>
        <taxon>Euarchontoglires</taxon>
        <taxon>Glires</taxon>
        <taxon>Rodentia</taxon>
        <taxon>Myomorpha</taxon>
        <taxon>Muroidea</taxon>
        <taxon>Muridae</taxon>
        <taxon>Murinae</taxon>
        <taxon>Rattus</taxon>
    </lineage>
</organism>
<evidence type="ECO:0000250" key="1">
    <source>
        <dbReference type="UniProtKB" id="Q8BHI7"/>
    </source>
</evidence>
<evidence type="ECO:0000250" key="2">
    <source>
        <dbReference type="UniProtKB" id="Q9NYP7"/>
    </source>
</evidence>
<evidence type="ECO:0000255" key="3">
    <source>
        <dbReference type="HAMAP-Rule" id="MF_03205"/>
    </source>
</evidence>
<evidence type="ECO:0000269" key="4">
    <source>
    </source>
</evidence>
<evidence type="ECO:0000269" key="5">
    <source>
    </source>
</evidence>
<evidence type="ECO:0000269" key="6">
    <source>
    </source>
</evidence>
<evidence type="ECO:0000305" key="7"/>
<evidence type="ECO:0000305" key="8">
    <source>
    </source>
</evidence>
<dbReference type="EC" id="2.3.1.199" evidence="3 5 6"/>
<dbReference type="EMBL" id="AB071985">
    <property type="protein sequence ID" value="BAB69887.1"/>
    <property type="molecule type" value="mRNA"/>
</dbReference>
<dbReference type="EMBL" id="HQ404314">
    <property type="protein sequence ID" value="ADP36858.1"/>
    <property type="molecule type" value="mRNA"/>
</dbReference>
<dbReference type="RefSeq" id="NP_599209.1">
    <property type="nucleotide sequence ID" value="NM_134382.2"/>
</dbReference>
<dbReference type="RefSeq" id="XP_006243479.1">
    <property type="nucleotide sequence ID" value="XM_006243417.2"/>
</dbReference>
<dbReference type="SMR" id="Q920L7"/>
<dbReference type="FunCoup" id="Q920L7">
    <property type="interactions" value="728"/>
</dbReference>
<dbReference type="STRING" id="10116.ENSRNOP00000010409"/>
<dbReference type="SwissLipids" id="SLP:000000274"/>
<dbReference type="SwissLipids" id="SLP:000000452"/>
<dbReference type="PhosphoSitePlus" id="Q920L7"/>
<dbReference type="PaxDb" id="10116-ENSRNOP00000010409"/>
<dbReference type="Ensembl" id="ENSRNOT00000010409.5">
    <property type="protein sequence ID" value="ENSRNOP00000010409.3"/>
    <property type="gene ID" value="ENSRNOG00000006331.5"/>
</dbReference>
<dbReference type="GeneID" id="171400"/>
<dbReference type="KEGG" id="rno:171400"/>
<dbReference type="UCSC" id="RGD:620583">
    <property type="organism name" value="rat"/>
</dbReference>
<dbReference type="AGR" id="RGD:620583"/>
<dbReference type="CTD" id="60481"/>
<dbReference type="RGD" id="620583">
    <property type="gene designation" value="Elovl5"/>
</dbReference>
<dbReference type="eggNOG" id="KOG3071">
    <property type="taxonomic scope" value="Eukaryota"/>
</dbReference>
<dbReference type="GeneTree" id="ENSGT01050000244838"/>
<dbReference type="HOGENOM" id="CLU_048483_0_1_1"/>
<dbReference type="InParanoid" id="Q920L7"/>
<dbReference type="PhylomeDB" id="Q920L7"/>
<dbReference type="TreeFam" id="TF323454"/>
<dbReference type="Reactome" id="R-RNO-2046105">
    <property type="pathway name" value="Linoleic acid (LA) metabolism"/>
</dbReference>
<dbReference type="Reactome" id="R-RNO-2046106">
    <property type="pathway name" value="alpha-linolenic acid (ALA) metabolism"/>
</dbReference>
<dbReference type="Reactome" id="R-RNO-75876">
    <property type="pathway name" value="Synthesis of very long-chain fatty acyl-CoAs"/>
</dbReference>
<dbReference type="UniPathway" id="UPA00658"/>
<dbReference type="PRO" id="PR:Q920L7"/>
<dbReference type="Proteomes" id="UP000002494">
    <property type="component" value="Chromosome 8"/>
</dbReference>
<dbReference type="Bgee" id="ENSRNOG00000006331">
    <property type="expression patterns" value="Expressed in liver and 19 other cell types or tissues"/>
</dbReference>
<dbReference type="GO" id="GO:0030425">
    <property type="term" value="C:dendrite"/>
    <property type="evidence" value="ECO:0007669"/>
    <property type="project" value="UniProtKB-SubCell"/>
</dbReference>
<dbReference type="GO" id="GO:0097447">
    <property type="term" value="C:dendritic tree"/>
    <property type="evidence" value="ECO:0000250"/>
    <property type="project" value="UniProtKB"/>
</dbReference>
<dbReference type="GO" id="GO:0005783">
    <property type="term" value="C:endoplasmic reticulum"/>
    <property type="evidence" value="ECO:0000266"/>
    <property type="project" value="RGD"/>
</dbReference>
<dbReference type="GO" id="GO:0005789">
    <property type="term" value="C:endoplasmic reticulum membrane"/>
    <property type="evidence" value="ECO:0000318"/>
    <property type="project" value="GO_Central"/>
</dbReference>
<dbReference type="GO" id="GO:0043025">
    <property type="term" value="C:neuronal cell body"/>
    <property type="evidence" value="ECO:0000250"/>
    <property type="project" value="UniProtKB"/>
</dbReference>
<dbReference type="GO" id="GO:0009922">
    <property type="term" value="F:fatty acid elongase activity"/>
    <property type="evidence" value="ECO:0000314"/>
    <property type="project" value="UniProtKB"/>
</dbReference>
<dbReference type="GO" id="GO:0036109">
    <property type="term" value="P:alpha-linolenic acid metabolic process"/>
    <property type="evidence" value="ECO:0007669"/>
    <property type="project" value="Ensembl"/>
</dbReference>
<dbReference type="GO" id="GO:0034625">
    <property type="term" value="P:fatty acid elongation, monounsaturated fatty acid"/>
    <property type="evidence" value="ECO:0000250"/>
    <property type="project" value="UniProtKB"/>
</dbReference>
<dbReference type="GO" id="GO:0034626">
    <property type="term" value="P:fatty acid elongation, polyunsaturated fatty acid"/>
    <property type="evidence" value="ECO:0000314"/>
    <property type="project" value="UniProtKB"/>
</dbReference>
<dbReference type="GO" id="GO:0019367">
    <property type="term" value="P:fatty acid elongation, saturated fatty acid"/>
    <property type="evidence" value="ECO:0000318"/>
    <property type="project" value="GO_Central"/>
</dbReference>
<dbReference type="GO" id="GO:0043651">
    <property type="term" value="P:linoleic acid metabolic process"/>
    <property type="evidence" value="ECO:0007669"/>
    <property type="project" value="Ensembl"/>
</dbReference>
<dbReference type="GO" id="GO:0042759">
    <property type="term" value="P:long-chain fatty acid biosynthetic process"/>
    <property type="evidence" value="ECO:0007669"/>
    <property type="project" value="Ensembl"/>
</dbReference>
<dbReference type="GO" id="GO:0035338">
    <property type="term" value="P:long-chain fatty-acyl-CoA biosynthetic process"/>
    <property type="evidence" value="ECO:0007669"/>
    <property type="project" value="UniProtKB-UniRule"/>
</dbReference>
<dbReference type="GO" id="GO:0045723">
    <property type="term" value="P:positive regulation of fatty acid biosynthetic process"/>
    <property type="evidence" value="ECO:0000266"/>
    <property type="project" value="RGD"/>
</dbReference>
<dbReference type="GO" id="GO:0030148">
    <property type="term" value="P:sphingolipid biosynthetic process"/>
    <property type="evidence" value="ECO:0000318"/>
    <property type="project" value="GO_Central"/>
</dbReference>
<dbReference type="GO" id="GO:0006636">
    <property type="term" value="P:unsaturated fatty acid biosynthetic process"/>
    <property type="evidence" value="ECO:0007669"/>
    <property type="project" value="UniProtKB-UniRule"/>
</dbReference>
<dbReference type="GO" id="GO:0042761">
    <property type="term" value="P:very long-chain fatty acid biosynthetic process"/>
    <property type="evidence" value="ECO:0000314"/>
    <property type="project" value="UniProtKB"/>
</dbReference>
<dbReference type="HAMAP" id="MF_03205">
    <property type="entry name" value="VLCF_elongase_5"/>
    <property type="match status" value="1"/>
</dbReference>
<dbReference type="InterPro" id="IPR002076">
    <property type="entry name" value="ELO_fam"/>
</dbReference>
<dbReference type="InterPro" id="IPR033677">
    <property type="entry name" value="ELOVL5"/>
</dbReference>
<dbReference type="PANTHER" id="PTHR11157:SF18">
    <property type="entry name" value="ELONGATION OF VERY LONG CHAIN FATTY ACIDS PROTEIN 5"/>
    <property type="match status" value="1"/>
</dbReference>
<dbReference type="PANTHER" id="PTHR11157">
    <property type="entry name" value="FATTY ACID ACYL TRANSFERASE-RELATED"/>
    <property type="match status" value="1"/>
</dbReference>
<dbReference type="Pfam" id="PF01151">
    <property type="entry name" value="ELO"/>
    <property type="match status" value="1"/>
</dbReference>
<feature type="chain" id="PRO_0000282842" description="Very long chain fatty acid elongase 5">
    <location>
        <begin position="1"/>
        <end position="299"/>
    </location>
</feature>
<feature type="transmembrane region" description="Helical" evidence="3">
    <location>
        <begin position="26"/>
        <end position="46"/>
    </location>
</feature>
<feature type="transmembrane region" description="Helical" evidence="3">
    <location>
        <begin position="64"/>
        <end position="84"/>
    </location>
</feature>
<feature type="transmembrane region" description="Helical" evidence="3">
    <location>
        <begin position="112"/>
        <end position="132"/>
    </location>
</feature>
<feature type="transmembrane region" description="Helical" evidence="3">
    <location>
        <begin position="139"/>
        <end position="158"/>
    </location>
</feature>
<feature type="transmembrane region" description="Helical" evidence="3">
    <location>
        <begin position="168"/>
        <end position="187"/>
    </location>
</feature>
<feature type="transmembrane region" description="Helical" evidence="3">
    <location>
        <begin position="205"/>
        <end position="225"/>
    </location>
</feature>
<feature type="transmembrane region" description="Helical" evidence="3">
    <location>
        <begin position="227"/>
        <end position="247"/>
    </location>
</feature>
<feature type="modified residue" description="N-acetylmethionine" evidence="2">
    <location>
        <position position="1"/>
    </location>
</feature>
<feature type="mutagenesis site" description="No effect on fatty acid elongase activity." evidence="6">
    <original>S</original>
    <variation>L</variation>
    <location>
        <position position="218"/>
    </location>
</feature>
<feature type="mutagenesis site" description="No effect on fatty acid elongase activity." evidence="6">
    <original>C</original>
    <variation>S</variation>
    <location>
        <position position="219"/>
    </location>
</feature>
<feature type="mutagenesis site" description="No effect on fatty acid elongase activity." evidence="6">
    <original>G</original>
    <variation>A</variation>
    <location>
        <position position="220"/>
    </location>
</feature>
<feature type="mutagenesis site" description="Changed substrate specificity. Can elongate (7Z,10Z,13Z,16Z,19Z)-3-oxodocosapentaenoyl-CoA into (9Z,12Z,15Z,18Z,21Z)-3-oxotetracosapentaenoyl-CoA." evidence="6">
    <original>W</original>
    <variation>C</variation>
    <location>
        <position position="231"/>
    </location>
</feature>
<feature type="mutagenesis site" description="No effect on fatty acid elongase activity." evidence="6">
    <original>Y</original>
    <variation>I</variation>
    <location>
        <position position="233"/>
    </location>
</feature>
<feature type="sequence conflict" description="In Ref. 2; ADP36858." evidence="7" ref="2">
    <original>F</original>
    <variation>S</variation>
    <location>
        <position position="59"/>
    </location>
</feature>
<feature type="sequence conflict" description="In Ref. 2; ADP36858." evidence="7" ref="2">
    <original>I</original>
    <variation>T</variation>
    <location>
        <position position="64"/>
    </location>
</feature>
<feature type="sequence conflict" description="In Ref. 2; ADP36858." evidence="7" ref="2">
    <original>E</original>
    <variation>G</variation>
    <location>
        <position position="104"/>
    </location>
</feature>
<feature type="sequence conflict" description="In Ref. 2; ADP36858." evidence="7" ref="2">
    <original>F</original>
    <variation>L</variation>
    <location>
        <position position="130"/>
    </location>
</feature>
<comment type="function">
    <text evidence="1 3 5 6">Catalyzes the first and rate-limiting reaction of the four reactions that constitute the long-chain fatty acids elongation cycle. This endoplasmic reticulum-bound enzymatic process allows the addition of 2 carbons to the chain of long- and very long-chain fatty acids (VLCFAs) per cycle. Condensing enzyme that acts specifically toward polyunsaturated acyl-CoA with the higher activity toward C18:3(n-6) acyl-CoA. May participate in the production of monounsaturated and of polyunsaturated VLCFAs of different chain lengths that are involved in multiple biological processes as precursors of membrane lipids and lipid mediators (By similarity) (PubMed:22216341, PubMed:23873268). In conditions where the essential linoleic and alpha linoleic fatty acids are lacking it is also involved in the synthesis of Mead acid from oleic acid (By similarity).</text>
</comment>
<comment type="catalytic activity">
    <reaction evidence="3 5 6">
        <text>a very-long-chain acyl-CoA + malonyl-CoA + H(+) = a very-long-chain 3-oxoacyl-CoA + CO2 + CoA</text>
        <dbReference type="Rhea" id="RHEA:32727"/>
        <dbReference type="ChEBI" id="CHEBI:15378"/>
        <dbReference type="ChEBI" id="CHEBI:16526"/>
        <dbReference type="ChEBI" id="CHEBI:57287"/>
        <dbReference type="ChEBI" id="CHEBI:57384"/>
        <dbReference type="ChEBI" id="CHEBI:90725"/>
        <dbReference type="ChEBI" id="CHEBI:90736"/>
        <dbReference type="EC" id="2.3.1.199"/>
    </reaction>
    <physiologicalReaction direction="left-to-right" evidence="8">
        <dbReference type="Rhea" id="RHEA:32728"/>
    </physiologicalReaction>
</comment>
<comment type="catalytic activity">
    <reaction evidence="5">
        <text>(6Z,9Z,12Z,15Z)-octadecatetraenoyl-CoA + malonyl-CoA + H(+) = (8Z,11Z,14Z,17Z)-3-oxoicosatetraenoyl-CoA + CO2 + CoA</text>
        <dbReference type="Rhea" id="RHEA:35391"/>
        <dbReference type="ChEBI" id="CHEBI:15378"/>
        <dbReference type="ChEBI" id="CHEBI:16526"/>
        <dbReference type="ChEBI" id="CHEBI:57287"/>
        <dbReference type="ChEBI" id="CHEBI:57384"/>
        <dbReference type="ChEBI" id="CHEBI:71489"/>
        <dbReference type="ChEBI" id="CHEBI:71491"/>
    </reaction>
    <physiologicalReaction direction="left-to-right" evidence="8">
        <dbReference type="Rhea" id="RHEA:35392"/>
    </physiologicalReaction>
</comment>
<comment type="catalytic activity">
    <reaction evidence="5">
        <text>(6Z,9Z,12Z)-octadecatrienoyl-CoA + malonyl-CoA + H(+) = (8Z,11Z,14Z)-3-oxoeicosatrienoyl-CoA + CO2 + CoA</text>
        <dbReference type="Rhea" id="RHEA:35379"/>
        <dbReference type="ChEBI" id="CHEBI:15378"/>
        <dbReference type="ChEBI" id="CHEBI:16526"/>
        <dbReference type="ChEBI" id="CHEBI:57287"/>
        <dbReference type="ChEBI" id="CHEBI:57363"/>
        <dbReference type="ChEBI" id="CHEBI:57384"/>
        <dbReference type="ChEBI" id="CHEBI:71481"/>
    </reaction>
    <physiologicalReaction direction="left-to-right" evidence="8">
        <dbReference type="Rhea" id="RHEA:35380"/>
    </physiologicalReaction>
</comment>
<comment type="catalytic activity">
    <reaction evidence="5 6">
        <text>(5Z,8Z,11Z,14Z,17Z)-eicosapentaenoyl-CoA + malonyl-CoA + H(+) = 3-oxo-(7Z,10Z,13Z,16Z,19Z)-docosapentaenoyl-CoA + CO2 + CoA</text>
        <dbReference type="Rhea" id="RHEA:36483"/>
        <dbReference type="ChEBI" id="CHEBI:15378"/>
        <dbReference type="ChEBI" id="CHEBI:16526"/>
        <dbReference type="ChEBI" id="CHEBI:57287"/>
        <dbReference type="ChEBI" id="CHEBI:57384"/>
        <dbReference type="ChEBI" id="CHEBI:73862"/>
        <dbReference type="ChEBI" id="CHEBI:73863"/>
    </reaction>
    <physiologicalReaction direction="left-to-right" evidence="8">
        <dbReference type="Rhea" id="RHEA:36484"/>
    </physiologicalReaction>
</comment>
<comment type="catalytic activity">
    <reaction evidence="5">
        <text>(5Z,8Z,11Z,14Z)-eicosatetraenoyl-CoA + malonyl-CoA + H(+) = (7Z,10Z,13Z,16Z)-3-oxodocosatetraenoyl-CoA + CO2 + CoA</text>
        <dbReference type="Rhea" id="RHEA:36475"/>
        <dbReference type="ChEBI" id="CHEBI:15378"/>
        <dbReference type="ChEBI" id="CHEBI:16526"/>
        <dbReference type="ChEBI" id="CHEBI:57287"/>
        <dbReference type="ChEBI" id="CHEBI:57368"/>
        <dbReference type="ChEBI" id="CHEBI:57384"/>
        <dbReference type="ChEBI" id="CHEBI:73852"/>
    </reaction>
    <physiologicalReaction direction="left-to-right" evidence="8">
        <dbReference type="Rhea" id="RHEA:36476"/>
    </physiologicalReaction>
</comment>
<comment type="catalytic activity">
    <reaction evidence="2">
        <text>(9Z,12Z,15Z)-octadecatrienoyl-CoA + malonyl-CoA + H(+) = (11Z,14Z,17Z)-3-oxoeicosatrienoyl-CoA + CO2 + CoA</text>
        <dbReference type="Rhea" id="RHEA:36523"/>
        <dbReference type="ChEBI" id="CHEBI:15378"/>
        <dbReference type="ChEBI" id="CHEBI:16526"/>
        <dbReference type="ChEBI" id="CHEBI:57287"/>
        <dbReference type="ChEBI" id="CHEBI:57384"/>
        <dbReference type="ChEBI" id="CHEBI:74034"/>
        <dbReference type="ChEBI" id="CHEBI:74054"/>
    </reaction>
    <physiologicalReaction direction="left-to-right" evidence="2">
        <dbReference type="Rhea" id="RHEA:36524"/>
    </physiologicalReaction>
</comment>
<comment type="catalytic activity">
    <reaction evidence="2">
        <text>(9Z)-hexadecenoyl-CoA + malonyl-CoA + H(+) = 3-oxo-(11Z)-octadecenoyl-CoA + CO2 + CoA</text>
        <dbReference type="Rhea" id="RHEA:39675"/>
        <dbReference type="ChEBI" id="CHEBI:15378"/>
        <dbReference type="ChEBI" id="CHEBI:16526"/>
        <dbReference type="ChEBI" id="CHEBI:57287"/>
        <dbReference type="ChEBI" id="CHEBI:57384"/>
        <dbReference type="ChEBI" id="CHEBI:61540"/>
        <dbReference type="ChEBI" id="CHEBI:76555"/>
    </reaction>
    <physiologicalReaction direction="left-to-right" evidence="2">
        <dbReference type="Rhea" id="RHEA:39676"/>
    </physiologicalReaction>
</comment>
<comment type="catalytic activity">
    <reaction evidence="2">
        <text>(9Z)-octadecenoyl-CoA + malonyl-CoA + H(+) = 3-oxo-(11Z)-eicosenoyl-CoA + CO2 + CoA</text>
        <dbReference type="Rhea" id="RHEA:36511"/>
        <dbReference type="ChEBI" id="CHEBI:15378"/>
        <dbReference type="ChEBI" id="CHEBI:16526"/>
        <dbReference type="ChEBI" id="CHEBI:57287"/>
        <dbReference type="ChEBI" id="CHEBI:57384"/>
        <dbReference type="ChEBI" id="CHEBI:57387"/>
        <dbReference type="ChEBI" id="CHEBI:74011"/>
    </reaction>
    <physiologicalReaction direction="left-to-right" evidence="2">
        <dbReference type="Rhea" id="RHEA:36512"/>
    </physiologicalReaction>
</comment>
<comment type="catalytic activity">
    <reaction evidence="2">
        <text>(11Z)-octadecenoyl-CoA + malonyl-CoA + H(+) = 3-oxo-(13Z)-eicosenoyl-CoA + CO2 + CoA</text>
        <dbReference type="Rhea" id="RHEA:39679"/>
        <dbReference type="ChEBI" id="CHEBI:15378"/>
        <dbReference type="ChEBI" id="CHEBI:16526"/>
        <dbReference type="ChEBI" id="CHEBI:57287"/>
        <dbReference type="ChEBI" id="CHEBI:57384"/>
        <dbReference type="ChEBI" id="CHEBI:75121"/>
        <dbReference type="ChEBI" id="CHEBI:76559"/>
    </reaction>
    <physiologicalReaction direction="left-to-right" evidence="2">
        <dbReference type="Rhea" id="RHEA:39680"/>
    </physiologicalReaction>
</comment>
<comment type="catalytic activity">
    <reaction evidence="2">
        <text>(9Z,12Z)-octadecadienoyl-CoA + malonyl-CoA + H(+) = (11Z,14Z)-3-oxoicosa-11,14-dienoyl-CoA + CO2 + CoA</text>
        <dbReference type="Rhea" id="RHEA:36503"/>
        <dbReference type="ChEBI" id="CHEBI:15378"/>
        <dbReference type="ChEBI" id="CHEBI:16526"/>
        <dbReference type="ChEBI" id="CHEBI:57287"/>
        <dbReference type="ChEBI" id="CHEBI:57383"/>
        <dbReference type="ChEBI" id="CHEBI:57384"/>
        <dbReference type="ChEBI" id="CHEBI:74012"/>
    </reaction>
    <physiologicalReaction direction="left-to-right" evidence="2">
        <dbReference type="Rhea" id="RHEA:36504"/>
    </physiologicalReaction>
</comment>
<comment type="pathway">
    <text evidence="3 5 6">Lipid metabolism; polyunsaturated fatty acid biosynthesis.</text>
</comment>
<comment type="subunit">
    <text evidence="2">Interacts with TECR.</text>
</comment>
<comment type="subcellular location">
    <subcellularLocation>
        <location evidence="3">Endoplasmic reticulum membrane</location>
        <topology evidence="3">Multi-pass membrane protein</topology>
    </subcellularLocation>
    <subcellularLocation>
        <location evidence="3">Cell projection</location>
        <location evidence="3">Dendrite</location>
    </subcellularLocation>
    <text evidence="3">In Purkinje cells, the protein localizes to the soma and proximal portion of the dendritic tree.</text>
</comment>
<comment type="tissue specificity">
    <text evidence="4">Highly expressed in lung and brain.</text>
</comment>
<comment type="similarity">
    <text evidence="3">Belongs to the ELO family. ELOVL5 subfamily.</text>
</comment>
<keyword id="KW-0007">Acetylation</keyword>
<keyword id="KW-0966">Cell projection</keyword>
<keyword id="KW-0256">Endoplasmic reticulum</keyword>
<keyword id="KW-0275">Fatty acid biosynthesis</keyword>
<keyword id="KW-0276">Fatty acid metabolism</keyword>
<keyword id="KW-0444">Lipid biosynthesis</keyword>
<keyword id="KW-0443">Lipid metabolism</keyword>
<keyword id="KW-0472">Membrane</keyword>
<keyword id="KW-1185">Reference proteome</keyword>
<keyword id="KW-0808">Transferase</keyword>
<keyword id="KW-0812">Transmembrane</keyword>
<keyword id="KW-1133">Transmembrane helix</keyword>
<proteinExistence type="evidence at protein level"/>
<accession>Q920L7</accession>
<accession>G9BD46</accession>
<reference key="1">
    <citation type="journal article" date="2002" name="Biosci. Biotechnol. Biochem.">
        <title>Identification and expression of a rat fatty acid elongase involved in the biosynthesis of C18 fatty acids.</title>
        <authorList>
            <person name="Inagaki K."/>
            <person name="Aki T."/>
            <person name="Fukuda Y."/>
            <person name="Kawamoto S."/>
            <person name="Shigeta S."/>
            <person name="Ono K."/>
            <person name="Suzuki O."/>
        </authorList>
    </citation>
    <scope>NUCLEOTIDE SEQUENCE [MRNA]</scope>
    <scope>TISSUE SPECIFICITY</scope>
    <source>
        <strain>Sprague-Dawley</strain>
        <tissue>Liver</tissue>
    </source>
</reference>
<reference key="2">
    <citation type="journal article" date="2011" name="PLoS ONE">
        <title>Elongase reactions as control points in long-chain polyunsaturated fatty acid synthesis.</title>
        <authorList>
            <person name="Gregory M.K."/>
            <person name="Gibson R.A."/>
            <person name="Cook-Johnson R.J."/>
            <person name="Cleland L.G."/>
            <person name="James M.J."/>
        </authorList>
    </citation>
    <scope>NUCLEOTIDE SEQUENCE [MRNA]</scope>
    <scope>FUNCTION</scope>
    <scope>CATALYTIC ACTIVITY</scope>
    <scope>PATHWAY</scope>
</reference>
<reference key="3">
    <citation type="journal article" date="2013" name="J. Lipid Res.">
        <title>Molecular basis for differential elongation of omega-3 docosapentaenoic acid by the rat Elovl5 and Elovl2.</title>
        <authorList>
            <person name="Gregory M.K."/>
            <person name="Cleland L.G."/>
            <person name="James M.J."/>
        </authorList>
    </citation>
    <scope>FUNCTION</scope>
    <scope>CATALYTIC ACTIVITY</scope>
    <scope>PATHWAY</scope>
    <scope>MUTAGENESIS OF SER-218; CYS-219; GLY-220; TRP-231 AND TYR-233</scope>
</reference>
<sequence>MEHFDASLSTYFRALLGPRDTRVKGWFLLDNYIPTFVCSAIYLLIVWLGPKYMKNRQPFSCRGILVVYNLGLTLLSLYMFYELVTGVWEGKYNFFCQGTRSAGESDMKVIRVLWWYYFSKLIEFMDTFFFILRKNNHQITVLHVYHHATMLNIWWFVMNWVPCGHSYFGATLNSFIHVLMYSYYGLSSVPSMRPYLWWKKYITQGQLVQFVLTIIQTSCGVIWPCSFPLGWLYFQIGYMISLIALFTNFYIQTYNKKGASRRKEHLKGHQNGSMTAVNGHTNNFASLENSVTSRKQRKD</sequence>
<gene>
    <name evidence="3" type="primary">Elovl5</name>
</gene>